<gene>
    <name evidence="1" type="primary">hprK</name>
    <name type="ordered locus">LBJ_1445</name>
</gene>
<keyword id="KW-0067">ATP-binding</keyword>
<keyword id="KW-0418">Kinase</keyword>
<keyword id="KW-0460">Magnesium</keyword>
<keyword id="KW-0479">Metal-binding</keyword>
<keyword id="KW-0511">Multifunctional enzyme</keyword>
<keyword id="KW-0547">Nucleotide-binding</keyword>
<keyword id="KW-0723">Serine/threonine-protein kinase</keyword>
<keyword id="KW-0808">Transferase</keyword>
<feature type="chain" id="PRO_1000067157" description="HPr kinase/phosphorylase">
    <location>
        <begin position="1"/>
        <end position="318"/>
    </location>
</feature>
<feature type="region of interest" description="Important for the catalytic mechanism of both phosphorylation and dephosphorylation" evidence="1">
    <location>
        <begin position="206"/>
        <end position="215"/>
    </location>
</feature>
<feature type="region of interest" description="Important for the catalytic mechanism of dephosphorylation" evidence="1">
    <location>
        <begin position="269"/>
        <end position="274"/>
    </location>
</feature>
<feature type="active site" evidence="1">
    <location>
        <position position="143"/>
    </location>
</feature>
<feature type="active site" evidence="1">
    <location>
        <position position="164"/>
    </location>
</feature>
<feature type="active site" description="Proton acceptor; for phosphorylation activity. Proton donor; for dephosphorylation activity" evidence="1">
    <location>
        <position position="182"/>
    </location>
</feature>
<feature type="active site" evidence="1">
    <location>
        <position position="248"/>
    </location>
</feature>
<feature type="binding site" evidence="1">
    <location>
        <begin position="158"/>
        <end position="165"/>
    </location>
    <ligand>
        <name>ATP</name>
        <dbReference type="ChEBI" id="CHEBI:30616"/>
    </ligand>
</feature>
<feature type="binding site" evidence="1">
    <location>
        <position position="165"/>
    </location>
    <ligand>
        <name>Mg(2+)</name>
        <dbReference type="ChEBI" id="CHEBI:18420"/>
    </ligand>
</feature>
<feature type="binding site" evidence="1">
    <location>
        <position position="207"/>
    </location>
    <ligand>
        <name>Mg(2+)</name>
        <dbReference type="ChEBI" id="CHEBI:18420"/>
    </ligand>
</feature>
<protein>
    <recommendedName>
        <fullName evidence="1">HPr kinase/phosphorylase</fullName>
        <shortName evidence="1">HPrK/P</shortName>
        <ecNumber evidence="1">2.7.11.-</ecNumber>
        <ecNumber evidence="1">2.7.4.-</ecNumber>
    </recommendedName>
    <alternativeName>
        <fullName evidence="1">HPr(Ser) kinase/phosphorylase</fullName>
    </alternativeName>
</protein>
<evidence type="ECO:0000255" key="1">
    <source>
        <dbReference type="HAMAP-Rule" id="MF_01249"/>
    </source>
</evidence>
<organism>
    <name type="scientific">Leptospira borgpetersenii serovar Hardjo-bovis (strain JB197)</name>
    <dbReference type="NCBI Taxonomy" id="355277"/>
    <lineage>
        <taxon>Bacteria</taxon>
        <taxon>Pseudomonadati</taxon>
        <taxon>Spirochaetota</taxon>
        <taxon>Spirochaetia</taxon>
        <taxon>Leptospirales</taxon>
        <taxon>Leptospiraceae</taxon>
        <taxon>Leptospira</taxon>
    </lineage>
</organism>
<name>HPRK_LEPBJ</name>
<comment type="function">
    <text evidence="1">Catalyzes the ATP- as well as the pyrophosphate-dependent phosphorylation of a specific serine residue in HPr, a phosphocarrier protein of the phosphoenolpyruvate-dependent sugar phosphotransferase system (PTS). HprK/P also catalyzes the pyrophosphate-producing, inorganic phosphate-dependent dephosphorylation (phosphorolysis) of seryl-phosphorylated HPr (P-Ser-HPr).</text>
</comment>
<comment type="catalytic activity">
    <reaction evidence="1">
        <text>[HPr protein]-L-serine + ATP = [HPr protein]-O-phospho-L-serine + ADP + H(+)</text>
        <dbReference type="Rhea" id="RHEA:46600"/>
        <dbReference type="Rhea" id="RHEA-COMP:11602"/>
        <dbReference type="Rhea" id="RHEA-COMP:11603"/>
        <dbReference type="ChEBI" id="CHEBI:15378"/>
        <dbReference type="ChEBI" id="CHEBI:29999"/>
        <dbReference type="ChEBI" id="CHEBI:30616"/>
        <dbReference type="ChEBI" id="CHEBI:83421"/>
        <dbReference type="ChEBI" id="CHEBI:456216"/>
    </reaction>
</comment>
<comment type="catalytic activity">
    <reaction evidence="1">
        <text>[HPr protein]-O-phospho-L-serine + phosphate + H(+) = [HPr protein]-L-serine + diphosphate</text>
        <dbReference type="Rhea" id="RHEA:46604"/>
        <dbReference type="Rhea" id="RHEA-COMP:11602"/>
        <dbReference type="Rhea" id="RHEA-COMP:11603"/>
        <dbReference type="ChEBI" id="CHEBI:15378"/>
        <dbReference type="ChEBI" id="CHEBI:29999"/>
        <dbReference type="ChEBI" id="CHEBI:33019"/>
        <dbReference type="ChEBI" id="CHEBI:43474"/>
        <dbReference type="ChEBI" id="CHEBI:83421"/>
    </reaction>
</comment>
<comment type="cofactor">
    <cofactor evidence="1">
        <name>Mg(2+)</name>
        <dbReference type="ChEBI" id="CHEBI:18420"/>
    </cofactor>
</comment>
<comment type="subunit">
    <text evidence="1">Homohexamer.</text>
</comment>
<comment type="domain">
    <text evidence="1">The Walker A ATP-binding motif also binds Pi and PPi.</text>
</comment>
<comment type="miscellaneous">
    <text evidence="1">Both phosphorylation and phosphorolysis are carried out by the same active site and suggest a common mechanism for both reactions.</text>
</comment>
<comment type="similarity">
    <text evidence="1">Belongs to the HPrK/P family.</text>
</comment>
<accession>Q04SV2</accession>
<reference key="1">
    <citation type="journal article" date="2006" name="Proc. Natl. Acad. Sci. U.S.A.">
        <title>Genome reduction in Leptospira borgpetersenii reflects limited transmission potential.</title>
        <authorList>
            <person name="Bulach D.M."/>
            <person name="Zuerner R.L."/>
            <person name="Wilson P."/>
            <person name="Seemann T."/>
            <person name="McGrath A."/>
            <person name="Cullen P.A."/>
            <person name="Davis J."/>
            <person name="Johnson M."/>
            <person name="Kuczek E."/>
            <person name="Alt D.P."/>
            <person name="Peterson-Burch B."/>
            <person name="Coppel R.L."/>
            <person name="Rood J.I."/>
            <person name="Davies J.K."/>
            <person name="Adler B."/>
        </authorList>
    </citation>
    <scope>NUCLEOTIDE SEQUENCE [LARGE SCALE GENOMIC DNA]</scope>
    <source>
        <strain>JB197</strain>
    </source>
</reference>
<proteinExistence type="inferred from homology"/>
<dbReference type="EC" id="2.7.11.-" evidence="1"/>
<dbReference type="EC" id="2.7.4.-" evidence="1"/>
<dbReference type="EMBL" id="CP000350">
    <property type="protein sequence ID" value="ABJ76018.1"/>
    <property type="molecule type" value="Genomic_DNA"/>
</dbReference>
<dbReference type="RefSeq" id="WP_011671756.1">
    <property type="nucleotide sequence ID" value="NC_008510.1"/>
</dbReference>
<dbReference type="SMR" id="Q04SV2"/>
<dbReference type="KEGG" id="lbj:LBJ_1445"/>
<dbReference type="HOGENOM" id="CLU_052030_0_1_12"/>
<dbReference type="Proteomes" id="UP000000656">
    <property type="component" value="Chromosome 1"/>
</dbReference>
<dbReference type="GO" id="GO:0005524">
    <property type="term" value="F:ATP binding"/>
    <property type="evidence" value="ECO:0007669"/>
    <property type="project" value="UniProtKB-UniRule"/>
</dbReference>
<dbReference type="GO" id="GO:0000287">
    <property type="term" value="F:magnesium ion binding"/>
    <property type="evidence" value="ECO:0007669"/>
    <property type="project" value="UniProtKB-UniRule"/>
</dbReference>
<dbReference type="GO" id="GO:0000155">
    <property type="term" value="F:phosphorelay sensor kinase activity"/>
    <property type="evidence" value="ECO:0007669"/>
    <property type="project" value="InterPro"/>
</dbReference>
<dbReference type="GO" id="GO:0004674">
    <property type="term" value="F:protein serine/threonine kinase activity"/>
    <property type="evidence" value="ECO:0007669"/>
    <property type="project" value="UniProtKB-KW"/>
</dbReference>
<dbReference type="GO" id="GO:0004712">
    <property type="term" value="F:protein serine/threonine/tyrosine kinase activity"/>
    <property type="evidence" value="ECO:0007669"/>
    <property type="project" value="UniProtKB-UniRule"/>
</dbReference>
<dbReference type="GO" id="GO:0006109">
    <property type="term" value="P:regulation of carbohydrate metabolic process"/>
    <property type="evidence" value="ECO:0007669"/>
    <property type="project" value="UniProtKB-UniRule"/>
</dbReference>
<dbReference type="CDD" id="cd01918">
    <property type="entry name" value="HprK_C"/>
    <property type="match status" value="1"/>
</dbReference>
<dbReference type="FunFam" id="3.40.50.300:FF:000174">
    <property type="entry name" value="HPr kinase/phosphorylase"/>
    <property type="match status" value="1"/>
</dbReference>
<dbReference type="Gene3D" id="3.40.1390.20">
    <property type="entry name" value="HprK N-terminal domain-like"/>
    <property type="match status" value="1"/>
</dbReference>
<dbReference type="Gene3D" id="3.40.50.300">
    <property type="entry name" value="P-loop containing nucleotide triphosphate hydrolases"/>
    <property type="match status" value="1"/>
</dbReference>
<dbReference type="HAMAP" id="MF_01249">
    <property type="entry name" value="HPr_kinase"/>
    <property type="match status" value="1"/>
</dbReference>
<dbReference type="InterPro" id="IPR003755">
    <property type="entry name" value="HPr(Ser)_kin/Pase"/>
</dbReference>
<dbReference type="InterPro" id="IPR011104">
    <property type="entry name" value="Hpr_kin/Pase_C"/>
</dbReference>
<dbReference type="InterPro" id="IPR011126">
    <property type="entry name" value="Hpr_kin/Pase_Hpr_N"/>
</dbReference>
<dbReference type="InterPro" id="IPR027417">
    <property type="entry name" value="P-loop_NTPase"/>
</dbReference>
<dbReference type="InterPro" id="IPR028979">
    <property type="entry name" value="Ser_kin/Pase_Hpr-like_N_sf"/>
</dbReference>
<dbReference type="NCBIfam" id="TIGR00679">
    <property type="entry name" value="hpr-ser"/>
    <property type="match status" value="1"/>
</dbReference>
<dbReference type="PANTHER" id="PTHR30305:SF1">
    <property type="entry name" value="HPR KINASE_PHOSPHORYLASE"/>
    <property type="match status" value="1"/>
</dbReference>
<dbReference type="PANTHER" id="PTHR30305">
    <property type="entry name" value="PROTEIN YJDM-RELATED"/>
    <property type="match status" value="1"/>
</dbReference>
<dbReference type="Pfam" id="PF07475">
    <property type="entry name" value="Hpr_kinase_C"/>
    <property type="match status" value="1"/>
</dbReference>
<dbReference type="Pfam" id="PF02603">
    <property type="entry name" value="Hpr_kinase_N"/>
    <property type="match status" value="1"/>
</dbReference>
<dbReference type="SUPFAM" id="SSF75138">
    <property type="entry name" value="HprK N-terminal domain-like"/>
    <property type="match status" value="1"/>
</dbReference>
<dbReference type="SUPFAM" id="SSF53795">
    <property type="entry name" value="PEP carboxykinase-like"/>
    <property type="match status" value="1"/>
</dbReference>
<sequence length="318" mass="35791">MSMPGINVSNLLNEHEELGLRLLAGEKGLTNRINMSEINRPGLSLTGFYESFAHDRIQIFGKGEWAYITSRIPEDLKNIAADFFSFHLNCIIFTHGNMPPPIFTENCERLAIPLMISDVSTHKFITLISGILDRSLAPRTMRHGVLIEVFGIGILLSGKSGVGKSETALELIERGHRLVADDMVEIRRLSESYLIGTCSDLLRHHMEIRGLGILNIKDIFGIGSVRDHKLIELIIRLEEWTEDKDFDRTGLENPTEELLGVQIPLIRVPVKPGRNIPIIVETAAMNQRLRKLGKNAAQEFNQKLSNYLQQGKVERNPP</sequence>